<accession>P42729</accession>
<keyword id="KW-0079">Bacteriocin immunity</keyword>
<protein>
    <recommendedName>
        <fullName>Trifolitoxin immunity protein</fullName>
    </recommendedName>
</protein>
<organism>
    <name type="scientific">Rhizobium leguminosarum bv. trifolii</name>
    <dbReference type="NCBI Taxonomy" id="386"/>
    <lineage>
        <taxon>Bacteria</taxon>
        <taxon>Pseudomonadati</taxon>
        <taxon>Pseudomonadota</taxon>
        <taxon>Alphaproteobacteria</taxon>
        <taxon>Hyphomicrobiales</taxon>
        <taxon>Rhizobiaceae</taxon>
        <taxon>Rhizobium/Agrobacterium group</taxon>
        <taxon>Rhizobium</taxon>
    </lineage>
</organism>
<proteinExistence type="predicted"/>
<feature type="chain" id="PRO_0000072509" description="Trifolitoxin immunity protein">
    <location>
        <begin position="1"/>
        <end position="261"/>
    </location>
</feature>
<gene>
    <name type="primary">tfxG</name>
</gene>
<name>TFXG_RHILT</name>
<sequence>MNDEICLTGGGRTTVTRRGGVVYREGGPWSSTVISLLRHLEASGFAEAPSVVGTGFDERGRETLSFIEGEFVHPGPWSEEAFPQFGMMLRRLHDATASFKPPENSMWRDWFGRNLGEGQHVIGHCDTGPWNIVCRSGLPVGLIDWEVAGPVRADIELAQACWLNAQLYDDDIAERVGLGSVTMRAHQVRLLLDGYGLSRKQRGGFVDKLITFAVHDAAEQAKEAAVTPESNDAEPLWAIAWRTRSASWMLHHRQTLEAALA</sequence>
<comment type="function">
    <text>Required for TFX resistance.</text>
</comment>
<dbReference type="EMBL" id="L06719">
    <property type="protein sequence ID" value="AAA26369.1"/>
    <property type="molecule type" value="Genomic_DNA"/>
</dbReference>
<dbReference type="PIR" id="G47116">
    <property type="entry name" value="G47116"/>
</dbReference>
<dbReference type="SMR" id="P42729"/>
<dbReference type="GO" id="GO:0030153">
    <property type="term" value="P:bacteriocin immunity"/>
    <property type="evidence" value="ECO:0007669"/>
    <property type="project" value="UniProtKB-KW"/>
</dbReference>
<dbReference type="InterPro" id="IPR011009">
    <property type="entry name" value="Kinase-like_dom_sf"/>
</dbReference>
<dbReference type="SUPFAM" id="SSF56112">
    <property type="entry name" value="Protein kinase-like (PK-like)"/>
    <property type="match status" value="1"/>
</dbReference>
<reference key="1">
    <citation type="journal article" date="1993" name="J. Bacteriol.">
        <title>DNA sequence and mutational analysis of genes involved in the production and resistance of the antibiotic peptide trifolitoxin.</title>
        <authorList>
            <person name="Breil B.T."/>
            <person name="Ludden P.W."/>
            <person name="Triplett E.W."/>
        </authorList>
    </citation>
    <scope>NUCLEOTIDE SEQUENCE [GENOMIC DNA]</scope>
    <source>
        <strain>T24</strain>
    </source>
</reference>